<evidence type="ECO:0000269" key="1">
    <source>
    </source>
</evidence>
<evidence type="ECO:0000305" key="2"/>
<gene>
    <name type="primary">hcaF</name>
    <name type="synonym">digB</name>
    <name type="synonym">hcaA2</name>
    <name type="synonym">hcaB</name>
    <name type="synonym">phdC2</name>
    <name type="synonym">yfhV</name>
    <name type="ordered locus">b2539</name>
    <name type="ordered locus">JW2523</name>
</gene>
<keyword id="KW-0002">3D-structure</keyword>
<keyword id="KW-0058">Aromatic hydrocarbons catabolism</keyword>
<keyword id="KW-0223">Dioxygenase</keyword>
<keyword id="KW-0520">NAD</keyword>
<keyword id="KW-0560">Oxidoreductase</keyword>
<keyword id="KW-1185">Reference proteome</keyword>
<sequence>MSAQVSLELHHRISQFLFHEASLLDDWKFRDWLAQLDEEIRYTMRTTVNAQTRDRRKGVQPPTTWIFNDTKDQLERRIARLETGMAWAEEPPSRTRHLISNCQISETDIPNVFAVRVNYLLYRAQKERDETFYVGTRFDKVRRLEDDNWRLLERDIVLDQAVITSHNLSVLF</sequence>
<comment type="function">
    <text evidence="1">Part of the multicomponent 3-phenylpropionate dioxygenase. Converts 3-phenylpropionic acid (PP) and cinnamic acid (CI) into 3-phenylpropionate-dihydrodiol (PP-dihydrodiol) and cinnamic acid-dihydrodiol (CI-dihydrodiol), respectively.</text>
</comment>
<comment type="catalytic activity">
    <reaction>
        <text>3-phenylpropanoate + NADH + O2 + H(+) = 3-(cis-5,6-dihydroxycyclohexa-1,3-dien-1-yl)propanoate + NAD(+)</text>
        <dbReference type="Rhea" id="RHEA:20357"/>
        <dbReference type="ChEBI" id="CHEBI:15378"/>
        <dbReference type="ChEBI" id="CHEBI:15379"/>
        <dbReference type="ChEBI" id="CHEBI:51057"/>
        <dbReference type="ChEBI" id="CHEBI:57540"/>
        <dbReference type="ChEBI" id="CHEBI:57945"/>
        <dbReference type="ChEBI" id="CHEBI:60087"/>
        <dbReference type="EC" id="1.14.12.19"/>
    </reaction>
</comment>
<comment type="catalytic activity">
    <reaction>
        <text>(E)-cinnamate + NADH + O2 + H(+) = (2E)-3-(cis-5,6-dihydroxycyclohexa-1,3-dien-1-yl)prop-2-enoate + NAD(+)</text>
        <dbReference type="Rhea" id="RHEA:25058"/>
        <dbReference type="ChEBI" id="CHEBI:15378"/>
        <dbReference type="ChEBI" id="CHEBI:15379"/>
        <dbReference type="ChEBI" id="CHEBI:15669"/>
        <dbReference type="ChEBI" id="CHEBI:57540"/>
        <dbReference type="ChEBI" id="CHEBI:57945"/>
        <dbReference type="ChEBI" id="CHEBI:61451"/>
        <dbReference type="EC" id="1.14.12.19"/>
    </reaction>
</comment>
<comment type="pathway">
    <text>Aromatic compound metabolism; 3-phenylpropanoate degradation.</text>
</comment>
<comment type="subunit">
    <text>This dioxygenase system consists of four proteins: the two subunits of the hydroxylase component (HcaE and HcaF), a ferredoxin (HcaC) and a ferredoxin reductase (HcaD).</text>
</comment>
<comment type="similarity">
    <text evidence="2">Belongs to the bacterial ring-hydroxylating dioxygenase beta subunit family.</text>
</comment>
<accession>Q47140</accession>
<accession>P77508</accession>
<protein>
    <recommendedName>
        <fullName>3-phenylpropionate/cinnamic acid dioxygenase subunit beta</fullName>
        <ecNumber>1.14.12.19</ecNumber>
    </recommendedName>
</protein>
<reference key="1">
    <citation type="journal article" date="1997" name="DNA Res.">
        <title>Construction of a contiguous 874-kb sequence of the Escherichia coli-K12 genome corresponding to 50.0-68.8 min on the linkage map and analysis of its sequence features.</title>
        <authorList>
            <person name="Yamamoto Y."/>
            <person name="Aiba H."/>
            <person name="Baba T."/>
            <person name="Hayashi K."/>
            <person name="Inada T."/>
            <person name="Isono K."/>
            <person name="Itoh T."/>
            <person name="Kimura S."/>
            <person name="Kitagawa M."/>
            <person name="Makino K."/>
            <person name="Miki T."/>
            <person name="Mitsuhashi N."/>
            <person name="Mizobuchi K."/>
            <person name="Mori H."/>
            <person name="Nakade S."/>
            <person name="Nakamura Y."/>
            <person name="Nashimoto H."/>
            <person name="Oshima T."/>
            <person name="Oyama S."/>
            <person name="Saito N."/>
            <person name="Sampei G."/>
            <person name="Satoh Y."/>
            <person name="Sivasundaram S."/>
            <person name="Tagami H."/>
            <person name="Takahashi H."/>
            <person name="Takeda J."/>
            <person name="Takemoto K."/>
            <person name="Uehara K."/>
            <person name="Wada C."/>
            <person name="Yamagata S."/>
            <person name="Horiuchi T."/>
        </authorList>
    </citation>
    <scope>NUCLEOTIDE SEQUENCE [LARGE SCALE GENOMIC DNA]</scope>
    <source>
        <strain>K12 / W3110 / ATCC 27325 / DSM 5911</strain>
    </source>
</reference>
<reference key="2">
    <citation type="journal article" date="1997" name="Science">
        <title>The complete genome sequence of Escherichia coli K-12.</title>
        <authorList>
            <person name="Blattner F.R."/>
            <person name="Plunkett G. III"/>
            <person name="Bloch C.A."/>
            <person name="Perna N.T."/>
            <person name="Burland V."/>
            <person name="Riley M."/>
            <person name="Collado-Vides J."/>
            <person name="Glasner J.D."/>
            <person name="Rode C.K."/>
            <person name="Mayhew G.F."/>
            <person name="Gregor J."/>
            <person name="Davis N.W."/>
            <person name="Kirkpatrick H.A."/>
            <person name="Goeden M.A."/>
            <person name="Rose D.J."/>
            <person name="Mau B."/>
            <person name="Shao Y."/>
        </authorList>
    </citation>
    <scope>NUCLEOTIDE SEQUENCE [LARGE SCALE GENOMIC DNA]</scope>
    <source>
        <strain>K12 / MG1655 / ATCC 47076</strain>
    </source>
</reference>
<reference key="3">
    <citation type="journal article" date="2006" name="Mol. Syst. Biol.">
        <title>Highly accurate genome sequences of Escherichia coli K-12 strains MG1655 and W3110.</title>
        <authorList>
            <person name="Hayashi K."/>
            <person name="Morooka N."/>
            <person name="Yamamoto Y."/>
            <person name="Fujita K."/>
            <person name="Isono K."/>
            <person name="Choi S."/>
            <person name="Ohtsubo E."/>
            <person name="Baba T."/>
            <person name="Wanner B.L."/>
            <person name="Mori H."/>
            <person name="Horiuchi T."/>
        </authorList>
    </citation>
    <scope>NUCLEOTIDE SEQUENCE [LARGE SCALE GENOMIC DNA]</scope>
    <source>
        <strain>K12 / W3110 / ATCC 27325 / DSM 5911</strain>
    </source>
</reference>
<reference key="4">
    <citation type="submission" date="1994-09" db="EMBL/GenBank/DDBJ databases">
        <authorList>
            <person name="Turlin E."/>
            <person name="Gasser F."/>
            <person name="Biville F."/>
        </authorList>
    </citation>
    <scope>NUCLEOTIDE SEQUENCE [GENOMIC DNA] OF 1-49</scope>
    <source>
        <strain>K12</strain>
    </source>
</reference>
<reference key="5">
    <citation type="journal article" date="1998" name="J. Bacteriol.">
        <title>Characterization of the hca cluster encoding the dioxygenolytic pathway for initial catabolism of 3-phenylpropionic acid in Escherichia coli K-12.</title>
        <authorList>
            <person name="Diaz E."/>
            <person name="Ferrandez A."/>
            <person name="Garcia J.L."/>
        </authorList>
    </citation>
    <scope>NUCLEOTIDE SEQUENCE [GENOMIC DNA] OF 42-172</scope>
    <scope>FUNCTION IN CATABOLISM OF PHENYLPROPIONIC AND CINNAMIC ACIDS</scope>
    <source>
        <strain>K12 / MC1061 / ATCC 53338 / DSM 7140</strain>
    </source>
</reference>
<dbReference type="EC" id="1.14.12.19"/>
<dbReference type="EMBL" id="U00096">
    <property type="protein sequence ID" value="AAC75592.1"/>
    <property type="molecule type" value="Genomic_DNA"/>
</dbReference>
<dbReference type="EMBL" id="AP009048">
    <property type="protein sequence ID" value="BAA16442.1"/>
    <property type="molecule type" value="Genomic_DNA"/>
</dbReference>
<dbReference type="EMBL" id="Z37966">
    <property type="protein sequence ID" value="CAA86019.1"/>
    <property type="molecule type" value="Genomic_DNA"/>
</dbReference>
<dbReference type="EMBL" id="Y11070">
    <property type="protein sequence ID" value="CAA71949.1"/>
    <property type="molecule type" value="Genomic_DNA"/>
</dbReference>
<dbReference type="PIR" id="B65031">
    <property type="entry name" value="B65031"/>
</dbReference>
<dbReference type="RefSeq" id="NP_417034.1">
    <property type="nucleotide sequence ID" value="NC_000913.3"/>
</dbReference>
<dbReference type="RefSeq" id="WP_001276072.1">
    <property type="nucleotide sequence ID" value="NZ_STEB01000011.1"/>
</dbReference>
<dbReference type="PDB" id="8K0A">
    <property type="method" value="EM"/>
    <property type="resolution" value="3.12 A"/>
    <property type="chains" value="B/D/F=1-172"/>
</dbReference>
<dbReference type="PDBsum" id="8K0A"/>
<dbReference type="EMDB" id="EMD-36758"/>
<dbReference type="SMR" id="Q47140"/>
<dbReference type="BioGRID" id="4261576">
    <property type="interactions" value="29"/>
</dbReference>
<dbReference type="ComplexPortal" id="CPX-5161">
    <property type="entry name" value="3-phenylpropionate/cinnamic acid dioxygenase"/>
</dbReference>
<dbReference type="FunCoup" id="Q47140">
    <property type="interactions" value="71"/>
</dbReference>
<dbReference type="STRING" id="511145.b2539"/>
<dbReference type="PaxDb" id="511145-b2539"/>
<dbReference type="EnsemblBacteria" id="AAC75592">
    <property type="protein sequence ID" value="AAC75592"/>
    <property type="gene ID" value="b2539"/>
</dbReference>
<dbReference type="GeneID" id="75206232"/>
<dbReference type="GeneID" id="946997"/>
<dbReference type="KEGG" id="ecj:JW2523"/>
<dbReference type="KEGG" id="eco:b2539"/>
<dbReference type="KEGG" id="ecoc:C3026_14065"/>
<dbReference type="PATRIC" id="fig|1411691.4.peg.4195"/>
<dbReference type="EchoBASE" id="EB3230"/>
<dbReference type="eggNOG" id="COG5517">
    <property type="taxonomic scope" value="Bacteria"/>
</dbReference>
<dbReference type="HOGENOM" id="CLU_102527_1_1_6"/>
<dbReference type="InParanoid" id="Q47140"/>
<dbReference type="OMA" id="HLQAHQF"/>
<dbReference type="OrthoDB" id="7062869at2"/>
<dbReference type="PhylomeDB" id="Q47140"/>
<dbReference type="BioCyc" id="EcoCyc:HCAA2-MONOMER"/>
<dbReference type="BioCyc" id="MetaCyc:HCAA2-MONOMER"/>
<dbReference type="UniPathway" id="UPA00714"/>
<dbReference type="PRO" id="PR:Q47140"/>
<dbReference type="Proteomes" id="UP000000625">
    <property type="component" value="Chromosome"/>
</dbReference>
<dbReference type="GO" id="GO:0009334">
    <property type="term" value="C:3-phenylpropionate dioxygenase complex"/>
    <property type="evidence" value="ECO:0000303"/>
    <property type="project" value="ComplexPortal"/>
</dbReference>
<dbReference type="GO" id="GO:0008695">
    <property type="term" value="F:3-phenylpropionate dioxygenase activity"/>
    <property type="evidence" value="ECO:0007669"/>
    <property type="project" value="UniProtKB-UniRule"/>
</dbReference>
<dbReference type="GO" id="GO:0019380">
    <property type="term" value="P:3-phenylpropionate catabolic process"/>
    <property type="evidence" value="ECO:0000315"/>
    <property type="project" value="EcoCyc"/>
</dbReference>
<dbReference type="CDD" id="cd00667">
    <property type="entry name" value="ring_hydroxylating_dioxygenases_beta"/>
    <property type="match status" value="1"/>
</dbReference>
<dbReference type="FunFam" id="3.10.450.50:FF:000008">
    <property type="entry name" value="3-phenylpropionate/cinnamic acid dioxygenase subunit beta"/>
    <property type="match status" value="1"/>
</dbReference>
<dbReference type="Gene3D" id="3.10.450.50">
    <property type="match status" value="1"/>
</dbReference>
<dbReference type="HAMAP" id="MF_01649">
    <property type="entry name" value="HcaF"/>
    <property type="match status" value="1"/>
</dbReference>
<dbReference type="InterPro" id="IPR054881">
    <property type="entry name" value="3PPDioc_HcaF"/>
</dbReference>
<dbReference type="InterPro" id="IPR023712">
    <property type="entry name" value="HcaF"/>
</dbReference>
<dbReference type="InterPro" id="IPR032710">
    <property type="entry name" value="NTF2-like_dom_sf"/>
</dbReference>
<dbReference type="InterPro" id="IPR000391">
    <property type="entry name" value="Rng_hydr_dOase-bsu"/>
</dbReference>
<dbReference type="NCBIfam" id="NF042947">
    <property type="entry name" value="3PPDioc_HcaF"/>
    <property type="match status" value="1"/>
</dbReference>
<dbReference type="NCBIfam" id="NF007479">
    <property type="entry name" value="PRK10069.1"/>
    <property type="match status" value="1"/>
</dbReference>
<dbReference type="PANTHER" id="PTHR41534:SF2">
    <property type="entry name" value="3-PHENYLPROPIONATE_CINNAMIC ACID DIOXYGENASE SUBUNIT BETA"/>
    <property type="match status" value="1"/>
</dbReference>
<dbReference type="PANTHER" id="PTHR41534">
    <property type="entry name" value="BLR3401 PROTEIN"/>
    <property type="match status" value="1"/>
</dbReference>
<dbReference type="Pfam" id="PF00866">
    <property type="entry name" value="Ring_hydroxyl_B"/>
    <property type="match status" value="1"/>
</dbReference>
<dbReference type="SUPFAM" id="SSF54427">
    <property type="entry name" value="NTF2-like"/>
    <property type="match status" value="1"/>
</dbReference>
<name>HCAF_ECOLI</name>
<proteinExistence type="evidence at protein level"/>
<feature type="chain" id="PRO_0000085077" description="3-phenylpropionate/cinnamic acid dioxygenase subunit beta">
    <location>
        <begin position="1"/>
        <end position="172"/>
    </location>
</feature>
<feature type="sequence conflict" description="In Ref. 4; CAA86019." evidence="2" ref="4">
    <original>H</original>
    <variation>Y</variation>
    <location>
        <position position="11"/>
    </location>
</feature>
<feature type="sequence conflict" description="In Ref. 4; CAA86019." evidence="2" ref="4">
    <original>N</original>
    <variation>D</variation>
    <location>
        <position position="49"/>
    </location>
</feature>
<organism>
    <name type="scientific">Escherichia coli (strain K12)</name>
    <dbReference type="NCBI Taxonomy" id="83333"/>
    <lineage>
        <taxon>Bacteria</taxon>
        <taxon>Pseudomonadati</taxon>
        <taxon>Pseudomonadota</taxon>
        <taxon>Gammaproteobacteria</taxon>
        <taxon>Enterobacterales</taxon>
        <taxon>Enterobacteriaceae</taxon>
        <taxon>Escherichia</taxon>
    </lineage>
</organism>